<reference key="1">
    <citation type="submission" date="2006-11" db="EMBL/GenBank/DDBJ databases">
        <title>Identification and characterization of a new conjugation/ type IVA secretion system (trb/tra) of L. pneumophila Corby localized on a mobile genomic island.</title>
        <authorList>
            <person name="Gloeckner G."/>
            <person name="Albert-Weissenberger C."/>
            <person name="Weinmann E."/>
            <person name="Jacobi S."/>
            <person name="Schunder E."/>
            <person name="Steinert M."/>
            <person name="Buchrieser C."/>
            <person name="Hacker J."/>
            <person name="Heuner K."/>
        </authorList>
    </citation>
    <scope>NUCLEOTIDE SEQUENCE [LARGE SCALE GENOMIC DNA]</scope>
    <source>
        <strain>Corby</strain>
    </source>
</reference>
<organism>
    <name type="scientific">Legionella pneumophila (strain Corby)</name>
    <dbReference type="NCBI Taxonomy" id="400673"/>
    <lineage>
        <taxon>Bacteria</taxon>
        <taxon>Pseudomonadati</taxon>
        <taxon>Pseudomonadota</taxon>
        <taxon>Gammaproteobacteria</taxon>
        <taxon>Legionellales</taxon>
        <taxon>Legionellaceae</taxon>
        <taxon>Legionella</taxon>
    </lineage>
</organism>
<feature type="chain" id="PRO_1000003189" description="Ribosome-recycling factor">
    <location>
        <begin position="1"/>
        <end position="185"/>
    </location>
</feature>
<comment type="function">
    <text evidence="1">Responsible for the release of ribosomes from messenger RNA at the termination of protein biosynthesis. May increase the efficiency of translation by recycling ribosomes from one round of translation to another.</text>
</comment>
<comment type="subcellular location">
    <subcellularLocation>
        <location evidence="1">Cytoplasm</location>
    </subcellularLocation>
</comment>
<comment type="similarity">
    <text evidence="1">Belongs to the RRF family.</text>
</comment>
<gene>
    <name evidence="1" type="primary">frr</name>
    <name type="ordered locus">LPC_1140</name>
</gene>
<keyword id="KW-0963">Cytoplasm</keyword>
<keyword id="KW-0648">Protein biosynthesis</keyword>
<accession>A5ICK7</accession>
<evidence type="ECO:0000255" key="1">
    <source>
        <dbReference type="HAMAP-Rule" id="MF_00040"/>
    </source>
</evidence>
<sequence length="185" mass="20863">MINEIKQDSEKRMKKTIEALHTDMSKIRTGRANASLLDHVMVDYYGSPTPLSQVANITTSDSRTILVTPWEKSMVAAIEKAILNSDLGLNPATAGTAIRVPMPPLTEERRKELIKVVRHEGEQGRVSIRNIRRDANNQLKELVKEKAISEDDERRAAEAIQKLTDRYISEVDAVLAEKEKDLMEI</sequence>
<name>RRF_LEGPC</name>
<dbReference type="EMBL" id="CP000675">
    <property type="protein sequence ID" value="ABQ55107.1"/>
    <property type="molecule type" value="Genomic_DNA"/>
</dbReference>
<dbReference type="RefSeq" id="WP_010947438.1">
    <property type="nucleotide sequence ID" value="NZ_JAPMSS010000002.1"/>
</dbReference>
<dbReference type="SMR" id="A5ICK7"/>
<dbReference type="GeneID" id="57035700"/>
<dbReference type="KEGG" id="lpc:LPC_1140"/>
<dbReference type="HOGENOM" id="CLU_073981_2_1_6"/>
<dbReference type="GO" id="GO:0005829">
    <property type="term" value="C:cytosol"/>
    <property type="evidence" value="ECO:0007669"/>
    <property type="project" value="GOC"/>
</dbReference>
<dbReference type="GO" id="GO:0043023">
    <property type="term" value="F:ribosomal large subunit binding"/>
    <property type="evidence" value="ECO:0007669"/>
    <property type="project" value="TreeGrafter"/>
</dbReference>
<dbReference type="GO" id="GO:0002184">
    <property type="term" value="P:cytoplasmic translational termination"/>
    <property type="evidence" value="ECO:0007669"/>
    <property type="project" value="TreeGrafter"/>
</dbReference>
<dbReference type="CDD" id="cd00520">
    <property type="entry name" value="RRF"/>
    <property type="match status" value="1"/>
</dbReference>
<dbReference type="FunFam" id="1.10.132.20:FF:000001">
    <property type="entry name" value="Ribosome-recycling factor"/>
    <property type="match status" value="1"/>
</dbReference>
<dbReference type="FunFam" id="3.30.1360.40:FF:000001">
    <property type="entry name" value="Ribosome-recycling factor"/>
    <property type="match status" value="1"/>
</dbReference>
<dbReference type="Gene3D" id="3.30.1360.40">
    <property type="match status" value="1"/>
</dbReference>
<dbReference type="Gene3D" id="1.10.132.20">
    <property type="entry name" value="Ribosome-recycling factor"/>
    <property type="match status" value="1"/>
</dbReference>
<dbReference type="HAMAP" id="MF_00040">
    <property type="entry name" value="RRF"/>
    <property type="match status" value="1"/>
</dbReference>
<dbReference type="InterPro" id="IPR002661">
    <property type="entry name" value="Ribosome_recyc_fac"/>
</dbReference>
<dbReference type="InterPro" id="IPR023584">
    <property type="entry name" value="Ribosome_recyc_fac_dom"/>
</dbReference>
<dbReference type="InterPro" id="IPR036191">
    <property type="entry name" value="RRF_sf"/>
</dbReference>
<dbReference type="NCBIfam" id="TIGR00496">
    <property type="entry name" value="frr"/>
    <property type="match status" value="1"/>
</dbReference>
<dbReference type="PANTHER" id="PTHR20982:SF3">
    <property type="entry name" value="MITOCHONDRIAL RIBOSOME RECYCLING FACTOR PSEUDO 1"/>
    <property type="match status" value="1"/>
</dbReference>
<dbReference type="PANTHER" id="PTHR20982">
    <property type="entry name" value="RIBOSOME RECYCLING FACTOR"/>
    <property type="match status" value="1"/>
</dbReference>
<dbReference type="Pfam" id="PF01765">
    <property type="entry name" value="RRF"/>
    <property type="match status" value="1"/>
</dbReference>
<dbReference type="SUPFAM" id="SSF55194">
    <property type="entry name" value="Ribosome recycling factor, RRF"/>
    <property type="match status" value="1"/>
</dbReference>
<protein>
    <recommendedName>
        <fullName evidence="1">Ribosome-recycling factor</fullName>
        <shortName evidence="1">RRF</shortName>
    </recommendedName>
    <alternativeName>
        <fullName evidence="1">Ribosome-releasing factor</fullName>
    </alternativeName>
</protein>
<proteinExistence type="inferred from homology"/>